<accession>P85568</accession>
<comment type="function">
    <text evidence="4">Mediates visceral muscle contractile activity (myotropic activity).</text>
</comment>
<comment type="subcellular location">
    <subcellularLocation>
        <location evidence="4">Secreted</location>
    </subcellularLocation>
</comment>
<comment type="similarity">
    <text evidence="1">Belongs to the periviscerokinin family.</text>
</comment>
<protein>
    <recommendedName>
        <fullName evidence="3">Periviscerokinin-3</fullName>
        <shortName evidence="3">CryDa-PVK-3</shortName>
    </recommendedName>
</protein>
<sequence length="11" mass="1087">GSSGLIAMPRV</sequence>
<dbReference type="GO" id="GO:0005576">
    <property type="term" value="C:extracellular region"/>
    <property type="evidence" value="ECO:0007669"/>
    <property type="project" value="UniProtKB-SubCell"/>
</dbReference>
<dbReference type="GO" id="GO:0007218">
    <property type="term" value="P:neuropeptide signaling pathway"/>
    <property type="evidence" value="ECO:0007669"/>
    <property type="project" value="UniProtKB-KW"/>
</dbReference>
<dbReference type="InterPro" id="IPR013231">
    <property type="entry name" value="Periviscerokinin"/>
</dbReference>
<dbReference type="Pfam" id="PF08259">
    <property type="entry name" value="Periviscerokin"/>
    <property type="match status" value="1"/>
</dbReference>
<evidence type="ECO:0000255" key="1"/>
<evidence type="ECO:0000269" key="2">
    <source>
    </source>
</evidence>
<evidence type="ECO:0000303" key="3">
    <source>
    </source>
</evidence>
<evidence type="ECO:0000305" key="4"/>
<name>PVK3_CRYDW</name>
<reference evidence="4" key="1">
    <citation type="journal article" date="2009" name="BMC Evol. Biol.">
        <title>A proteomic approach for studying insect phylogeny: CAPA peptides of ancient insect taxa (Dictyoptera, Blattoptera) as a test case.</title>
        <authorList>
            <person name="Roth S."/>
            <person name="Fromm B."/>
            <person name="Gaede G."/>
            <person name="Predel R."/>
        </authorList>
    </citation>
    <scope>PROTEIN SEQUENCE</scope>
    <scope>AMIDATION AT VAL-11</scope>
    <source>
        <tissue evidence="2">Abdominal perisympathetic organs</tissue>
    </source>
</reference>
<keyword id="KW-0027">Amidation</keyword>
<keyword id="KW-0903">Direct protein sequencing</keyword>
<keyword id="KW-0527">Neuropeptide</keyword>
<keyword id="KW-0964">Secreted</keyword>
<organism>
    <name type="scientific">Cryptocercus darwini</name>
    <name type="common">Brown-hooded cockroach</name>
    <dbReference type="NCBI Taxonomy" id="89835"/>
    <lineage>
        <taxon>Eukaryota</taxon>
        <taxon>Metazoa</taxon>
        <taxon>Ecdysozoa</taxon>
        <taxon>Arthropoda</taxon>
        <taxon>Hexapoda</taxon>
        <taxon>Insecta</taxon>
        <taxon>Pterygota</taxon>
        <taxon>Neoptera</taxon>
        <taxon>Polyneoptera</taxon>
        <taxon>Dictyoptera</taxon>
        <taxon>Blattodea</taxon>
        <taxon>Blattoidea</taxon>
        <taxon>Cryptocercidae</taxon>
        <taxon>Cryptocercus</taxon>
    </lineage>
</organism>
<feature type="peptide" id="PRO_0000378821" description="Periviscerokinin-3" evidence="2">
    <location>
        <begin position="1"/>
        <end position="11"/>
    </location>
</feature>
<feature type="modified residue" description="Valine amide" evidence="2">
    <location>
        <position position="11"/>
    </location>
</feature>
<proteinExistence type="evidence at protein level"/>